<dbReference type="EMBL" id="CP000764">
    <property type="protein sequence ID" value="ABS24193.1"/>
    <property type="molecule type" value="Genomic_DNA"/>
</dbReference>
<dbReference type="RefSeq" id="WP_012096455.1">
    <property type="nucleotide sequence ID" value="NC_009674.1"/>
</dbReference>
<dbReference type="SMR" id="A7GVN5"/>
<dbReference type="STRING" id="315749.Bcer98_4012"/>
<dbReference type="GeneID" id="33899242"/>
<dbReference type="KEGG" id="bcy:Bcer98_4012"/>
<dbReference type="eggNOG" id="COG0238">
    <property type="taxonomic scope" value="Bacteria"/>
</dbReference>
<dbReference type="HOGENOM" id="CLU_148710_2_2_9"/>
<dbReference type="OrthoDB" id="9812008at2"/>
<dbReference type="Proteomes" id="UP000002300">
    <property type="component" value="Chromosome"/>
</dbReference>
<dbReference type="GO" id="GO:0022627">
    <property type="term" value="C:cytosolic small ribosomal subunit"/>
    <property type="evidence" value="ECO:0007669"/>
    <property type="project" value="TreeGrafter"/>
</dbReference>
<dbReference type="GO" id="GO:0070181">
    <property type="term" value="F:small ribosomal subunit rRNA binding"/>
    <property type="evidence" value="ECO:0007669"/>
    <property type="project" value="TreeGrafter"/>
</dbReference>
<dbReference type="GO" id="GO:0003735">
    <property type="term" value="F:structural constituent of ribosome"/>
    <property type="evidence" value="ECO:0007669"/>
    <property type="project" value="InterPro"/>
</dbReference>
<dbReference type="GO" id="GO:0006412">
    <property type="term" value="P:translation"/>
    <property type="evidence" value="ECO:0007669"/>
    <property type="project" value="UniProtKB-UniRule"/>
</dbReference>
<dbReference type="FunFam" id="4.10.640.10:FF:000003">
    <property type="entry name" value="30S ribosomal protein S18"/>
    <property type="match status" value="1"/>
</dbReference>
<dbReference type="Gene3D" id="4.10.640.10">
    <property type="entry name" value="Ribosomal protein S18"/>
    <property type="match status" value="1"/>
</dbReference>
<dbReference type="HAMAP" id="MF_00270">
    <property type="entry name" value="Ribosomal_bS18"/>
    <property type="match status" value="1"/>
</dbReference>
<dbReference type="InterPro" id="IPR001648">
    <property type="entry name" value="Ribosomal_bS18"/>
</dbReference>
<dbReference type="InterPro" id="IPR018275">
    <property type="entry name" value="Ribosomal_bS18_CS"/>
</dbReference>
<dbReference type="InterPro" id="IPR036870">
    <property type="entry name" value="Ribosomal_bS18_sf"/>
</dbReference>
<dbReference type="NCBIfam" id="TIGR00165">
    <property type="entry name" value="S18"/>
    <property type="match status" value="1"/>
</dbReference>
<dbReference type="PANTHER" id="PTHR13479">
    <property type="entry name" value="30S RIBOSOMAL PROTEIN S18"/>
    <property type="match status" value="1"/>
</dbReference>
<dbReference type="PANTHER" id="PTHR13479:SF40">
    <property type="entry name" value="SMALL RIBOSOMAL SUBUNIT PROTEIN BS18M"/>
    <property type="match status" value="1"/>
</dbReference>
<dbReference type="Pfam" id="PF01084">
    <property type="entry name" value="Ribosomal_S18"/>
    <property type="match status" value="1"/>
</dbReference>
<dbReference type="PRINTS" id="PR00974">
    <property type="entry name" value="RIBOSOMALS18"/>
</dbReference>
<dbReference type="SUPFAM" id="SSF46911">
    <property type="entry name" value="Ribosomal protein S18"/>
    <property type="match status" value="1"/>
</dbReference>
<dbReference type="PROSITE" id="PS00057">
    <property type="entry name" value="RIBOSOMAL_S18"/>
    <property type="match status" value="1"/>
</dbReference>
<comment type="function">
    <text evidence="1">Binds as a heterodimer with protein bS6 to the central domain of the 16S rRNA, where it helps stabilize the platform of the 30S subunit.</text>
</comment>
<comment type="subunit">
    <text evidence="1">Part of the 30S ribosomal subunit. Forms a tight heterodimer with protein bS6.</text>
</comment>
<comment type="similarity">
    <text evidence="1">Belongs to the bacterial ribosomal protein bS18 family.</text>
</comment>
<keyword id="KW-0687">Ribonucleoprotein</keyword>
<keyword id="KW-0689">Ribosomal protein</keyword>
<keyword id="KW-0694">RNA-binding</keyword>
<keyword id="KW-0699">rRNA-binding</keyword>
<gene>
    <name evidence="1" type="primary">rpsR</name>
    <name type="ordered locus">Bcer98_4012</name>
</gene>
<proteinExistence type="inferred from homology"/>
<feature type="chain" id="PRO_1000078689" description="Small ribosomal subunit protein bS18">
    <location>
        <begin position="1"/>
        <end position="77"/>
    </location>
</feature>
<sequence>MAGRKGGRAKRRKVCFFTANGITHIDYKDVDLLKRFVSERGKILPRRVTGTSAKYQRKLTVAIKRARQMALLPYVGE</sequence>
<accession>A7GVN5</accession>
<protein>
    <recommendedName>
        <fullName evidence="1">Small ribosomal subunit protein bS18</fullName>
    </recommendedName>
    <alternativeName>
        <fullName evidence="2">30S ribosomal protein S18</fullName>
    </alternativeName>
</protein>
<reference key="1">
    <citation type="journal article" date="2008" name="Chem. Biol. Interact.">
        <title>Extending the Bacillus cereus group genomics to putative food-borne pathogens of different toxicity.</title>
        <authorList>
            <person name="Lapidus A."/>
            <person name="Goltsman E."/>
            <person name="Auger S."/>
            <person name="Galleron N."/>
            <person name="Segurens B."/>
            <person name="Dossat C."/>
            <person name="Land M.L."/>
            <person name="Broussolle V."/>
            <person name="Brillard J."/>
            <person name="Guinebretiere M.-H."/>
            <person name="Sanchis V."/>
            <person name="Nguen-the C."/>
            <person name="Lereclus D."/>
            <person name="Richardson P."/>
            <person name="Wincker P."/>
            <person name="Weissenbach J."/>
            <person name="Ehrlich S.D."/>
            <person name="Sorokin A."/>
        </authorList>
    </citation>
    <scope>NUCLEOTIDE SEQUENCE [LARGE SCALE GENOMIC DNA]</scope>
    <source>
        <strain>DSM 22905 / CIP 110041 / 391-98 / NVH 391-98</strain>
    </source>
</reference>
<evidence type="ECO:0000255" key="1">
    <source>
        <dbReference type="HAMAP-Rule" id="MF_00270"/>
    </source>
</evidence>
<evidence type="ECO:0000305" key="2"/>
<name>RS18_BACCN</name>
<organism>
    <name type="scientific">Bacillus cytotoxicus (strain DSM 22905 / CIP 110041 / 391-98 / NVH 391-98)</name>
    <dbReference type="NCBI Taxonomy" id="315749"/>
    <lineage>
        <taxon>Bacteria</taxon>
        <taxon>Bacillati</taxon>
        <taxon>Bacillota</taxon>
        <taxon>Bacilli</taxon>
        <taxon>Bacillales</taxon>
        <taxon>Bacillaceae</taxon>
        <taxon>Bacillus</taxon>
        <taxon>Bacillus cereus group</taxon>
    </lineage>
</organism>